<keyword id="KW-0007">Acetylation</keyword>
<keyword id="KW-0009">Actin-binding</keyword>
<keyword id="KW-0106">Calcium</keyword>
<keyword id="KW-0966">Cell projection</keyword>
<keyword id="KW-0963">Cytoplasm</keyword>
<keyword id="KW-0479">Metal-binding</keyword>
<keyword id="KW-0597">Phosphoprotein</keyword>
<keyword id="KW-1185">Reference proteome</keyword>
<keyword id="KW-0677">Repeat</keyword>
<evidence type="ECO:0000250" key="1"/>
<evidence type="ECO:0000250" key="2">
    <source>
        <dbReference type="UniProtKB" id="Q14651"/>
    </source>
</evidence>
<evidence type="ECO:0000255" key="3">
    <source>
        <dbReference type="PROSITE-ProRule" id="PRU00044"/>
    </source>
</evidence>
<evidence type="ECO:0000255" key="4">
    <source>
        <dbReference type="PROSITE-ProRule" id="PRU00448"/>
    </source>
</evidence>
<evidence type="ECO:0000269" key="5">
    <source>
    </source>
</evidence>
<evidence type="ECO:0000269" key="6">
    <source>
    </source>
</evidence>
<protein>
    <recommendedName>
        <fullName>Plastin-1</fullName>
    </recommendedName>
</protein>
<comment type="function">
    <text evidence="5 6">Actin-bundling protein. In the inner ear, it is required for stereocilia formation. Mediates liquid packing of actin filaments that is necessary for stereocilia to grow to their proper dimensions (PubMed:27811163).</text>
</comment>
<comment type="subunit">
    <text evidence="1">Monomer.</text>
</comment>
<comment type="subcellular location">
    <subcellularLocation>
        <location evidence="1">Cytoplasm</location>
    </subcellularLocation>
    <subcellularLocation>
        <location evidence="5 6">Cell projection</location>
        <location evidence="5 6">Stereocilium</location>
    </subcellularLocation>
</comment>
<comment type="tissue specificity">
    <text evidence="5 6">In the inner ear, it is expressed in the organ of Corti (PubMed:25124451). Abundant in the utricle (at protein level) (PubMed:27811163).</text>
</comment>
<comment type="PTM">
    <text evidence="1">Phosphorylated.</text>
</comment>
<comment type="disruption phenotype">
    <text evidence="5 6">Knockout animals have a progressive form of hearing loss at all frequencies. Hearing loss is moderate in young adult mice, progresses to severe deafness with age, and is associated with defects in stereocilia morphology. Stereocilia are shorter and narrower than those of wild-type mice.</text>
</comment>
<reference key="1">
    <citation type="journal article" date="2005" name="Science">
        <title>The transcriptional landscape of the mammalian genome.</title>
        <authorList>
            <person name="Carninci P."/>
            <person name="Kasukawa T."/>
            <person name="Katayama S."/>
            <person name="Gough J."/>
            <person name="Frith M.C."/>
            <person name="Maeda N."/>
            <person name="Oyama R."/>
            <person name="Ravasi T."/>
            <person name="Lenhard B."/>
            <person name="Wells C."/>
            <person name="Kodzius R."/>
            <person name="Shimokawa K."/>
            <person name="Bajic V.B."/>
            <person name="Brenner S.E."/>
            <person name="Batalov S."/>
            <person name="Forrest A.R."/>
            <person name="Zavolan M."/>
            <person name="Davis M.J."/>
            <person name="Wilming L.G."/>
            <person name="Aidinis V."/>
            <person name="Allen J.E."/>
            <person name="Ambesi-Impiombato A."/>
            <person name="Apweiler R."/>
            <person name="Aturaliya R.N."/>
            <person name="Bailey T.L."/>
            <person name="Bansal M."/>
            <person name="Baxter L."/>
            <person name="Beisel K.W."/>
            <person name="Bersano T."/>
            <person name="Bono H."/>
            <person name="Chalk A.M."/>
            <person name="Chiu K.P."/>
            <person name="Choudhary V."/>
            <person name="Christoffels A."/>
            <person name="Clutterbuck D.R."/>
            <person name="Crowe M.L."/>
            <person name="Dalla E."/>
            <person name="Dalrymple B.P."/>
            <person name="de Bono B."/>
            <person name="Della Gatta G."/>
            <person name="di Bernardo D."/>
            <person name="Down T."/>
            <person name="Engstrom P."/>
            <person name="Fagiolini M."/>
            <person name="Faulkner G."/>
            <person name="Fletcher C.F."/>
            <person name="Fukushima T."/>
            <person name="Furuno M."/>
            <person name="Futaki S."/>
            <person name="Gariboldi M."/>
            <person name="Georgii-Hemming P."/>
            <person name="Gingeras T.R."/>
            <person name="Gojobori T."/>
            <person name="Green R.E."/>
            <person name="Gustincich S."/>
            <person name="Harbers M."/>
            <person name="Hayashi Y."/>
            <person name="Hensch T.K."/>
            <person name="Hirokawa N."/>
            <person name="Hill D."/>
            <person name="Huminiecki L."/>
            <person name="Iacono M."/>
            <person name="Ikeo K."/>
            <person name="Iwama A."/>
            <person name="Ishikawa T."/>
            <person name="Jakt M."/>
            <person name="Kanapin A."/>
            <person name="Katoh M."/>
            <person name="Kawasawa Y."/>
            <person name="Kelso J."/>
            <person name="Kitamura H."/>
            <person name="Kitano H."/>
            <person name="Kollias G."/>
            <person name="Krishnan S.P."/>
            <person name="Kruger A."/>
            <person name="Kummerfeld S.K."/>
            <person name="Kurochkin I.V."/>
            <person name="Lareau L.F."/>
            <person name="Lazarevic D."/>
            <person name="Lipovich L."/>
            <person name="Liu J."/>
            <person name="Liuni S."/>
            <person name="McWilliam S."/>
            <person name="Madan Babu M."/>
            <person name="Madera M."/>
            <person name="Marchionni L."/>
            <person name="Matsuda H."/>
            <person name="Matsuzawa S."/>
            <person name="Miki H."/>
            <person name="Mignone F."/>
            <person name="Miyake S."/>
            <person name="Morris K."/>
            <person name="Mottagui-Tabar S."/>
            <person name="Mulder N."/>
            <person name="Nakano N."/>
            <person name="Nakauchi H."/>
            <person name="Ng P."/>
            <person name="Nilsson R."/>
            <person name="Nishiguchi S."/>
            <person name="Nishikawa S."/>
            <person name="Nori F."/>
            <person name="Ohara O."/>
            <person name="Okazaki Y."/>
            <person name="Orlando V."/>
            <person name="Pang K.C."/>
            <person name="Pavan W.J."/>
            <person name="Pavesi G."/>
            <person name="Pesole G."/>
            <person name="Petrovsky N."/>
            <person name="Piazza S."/>
            <person name="Reed J."/>
            <person name="Reid J.F."/>
            <person name="Ring B.Z."/>
            <person name="Ringwald M."/>
            <person name="Rost B."/>
            <person name="Ruan Y."/>
            <person name="Salzberg S.L."/>
            <person name="Sandelin A."/>
            <person name="Schneider C."/>
            <person name="Schoenbach C."/>
            <person name="Sekiguchi K."/>
            <person name="Semple C.A."/>
            <person name="Seno S."/>
            <person name="Sessa L."/>
            <person name="Sheng Y."/>
            <person name="Shibata Y."/>
            <person name="Shimada H."/>
            <person name="Shimada K."/>
            <person name="Silva D."/>
            <person name="Sinclair B."/>
            <person name="Sperling S."/>
            <person name="Stupka E."/>
            <person name="Sugiura K."/>
            <person name="Sultana R."/>
            <person name="Takenaka Y."/>
            <person name="Taki K."/>
            <person name="Tammoja K."/>
            <person name="Tan S.L."/>
            <person name="Tang S."/>
            <person name="Taylor M.S."/>
            <person name="Tegner J."/>
            <person name="Teichmann S.A."/>
            <person name="Ueda H.R."/>
            <person name="van Nimwegen E."/>
            <person name="Verardo R."/>
            <person name="Wei C.L."/>
            <person name="Yagi K."/>
            <person name="Yamanishi H."/>
            <person name="Zabarovsky E."/>
            <person name="Zhu S."/>
            <person name="Zimmer A."/>
            <person name="Hide W."/>
            <person name="Bult C."/>
            <person name="Grimmond S.M."/>
            <person name="Teasdale R.D."/>
            <person name="Liu E.T."/>
            <person name="Brusic V."/>
            <person name="Quackenbush J."/>
            <person name="Wahlestedt C."/>
            <person name="Mattick J.S."/>
            <person name="Hume D.A."/>
            <person name="Kai C."/>
            <person name="Sasaki D."/>
            <person name="Tomaru Y."/>
            <person name="Fukuda S."/>
            <person name="Kanamori-Katayama M."/>
            <person name="Suzuki M."/>
            <person name="Aoki J."/>
            <person name="Arakawa T."/>
            <person name="Iida J."/>
            <person name="Imamura K."/>
            <person name="Itoh M."/>
            <person name="Kato T."/>
            <person name="Kawaji H."/>
            <person name="Kawagashira N."/>
            <person name="Kawashima T."/>
            <person name="Kojima M."/>
            <person name="Kondo S."/>
            <person name="Konno H."/>
            <person name="Nakano K."/>
            <person name="Ninomiya N."/>
            <person name="Nishio T."/>
            <person name="Okada M."/>
            <person name="Plessy C."/>
            <person name="Shibata K."/>
            <person name="Shiraki T."/>
            <person name="Suzuki S."/>
            <person name="Tagami M."/>
            <person name="Waki K."/>
            <person name="Watahiki A."/>
            <person name="Okamura-Oho Y."/>
            <person name="Suzuki H."/>
            <person name="Kawai J."/>
            <person name="Hayashizaki Y."/>
        </authorList>
    </citation>
    <scope>NUCLEOTIDE SEQUENCE [LARGE SCALE MRNA]</scope>
    <source>
        <strain>C57BL/6J</strain>
        <tissue>Testis</tissue>
    </source>
</reference>
<reference key="2">
    <citation type="submission" date="2005-07" db="EMBL/GenBank/DDBJ databases">
        <authorList>
            <person name="Mural R.J."/>
            <person name="Adams M.D."/>
            <person name="Myers E.W."/>
            <person name="Smith H.O."/>
            <person name="Venter J.C."/>
        </authorList>
    </citation>
    <scope>NUCLEOTIDE SEQUENCE [LARGE SCALE GENOMIC DNA]</scope>
</reference>
<reference key="3">
    <citation type="journal article" date="2004" name="Genome Res.">
        <title>The status, quality, and expansion of the NIH full-length cDNA project: the Mammalian Gene Collection (MGC).</title>
        <authorList>
            <consortium name="The MGC Project Team"/>
        </authorList>
    </citation>
    <scope>NUCLEOTIDE SEQUENCE [LARGE SCALE MRNA]</scope>
    <source>
        <tissue>Testis</tissue>
    </source>
</reference>
<reference key="4">
    <citation type="journal article" date="2010" name="Cell">
        <title>A tissue-specific atlas of mouse protein phosphorylation and expression.</title>
        <authorList>
            <person name="Huttlin E.L."/>
            <person name="Jedrychowski M.P."/>
            <person name="Elias J.E."/>
            <person name="Goswami T."/>
            <person name="Rad R."/>
            <person name="Beausoleil S.A."/>
            <person name="Villen J."/>
            <person name="Haas W."/>
            <person name="Sowa M.E."/>
            <person name="Gygi S.P."/>
        </authorList>
    </citation>
    <scope>IDENTIFICATION BY MASS SPECTROMETRY [LARGE SCALE ANALYSIS]</scope>
    <source>
        <tissue>Brain</tissue>
        <tissue>Kidney</tissue>
        <tissue>Liver</tissue>
        <tissue>Lung</tissue>
        <tissue>Pancreas</tissue>
        <tissue>Spleen</tissue>
    </source>
</reference>
<reference key="5">
    <citation type="journal article" date="2015" name="Hum. Mol. Genet.">
        <title>Absence of plastin 1 causes abnormal maintenance of hair cell stereocilia and a moderate form of hearing loss in mice.</title>
        <authorList>
            <person name="Taylor R."/>
            <person name="Bullen A."/>
            <person name="Johnson S.L."/>
            <person name="Grimm-Guenter E.M."/>
            <person name="Rivero F."/>
            <person name="Marcotti W."/>
            <person name="Forge A."/>
            <person name="Daudet N."/>
        </authorList>
    </citation>
    <scope>FUNCTION</scope>
    <scope>TISSUE SPECIFICITY</scope>
    <scope>SUBCELLULAR LOCATION</scope>
    <scope>DISRUPTION PHENOTYPE</scope>
</reference>
<reference key="6">
    <citation type="journal article" date="2016" name="J. Cell Biol.">
        <title>Plastin 1 widens stereocilia by transforming actin filament packing from hexagonal to liquid.</title>
        <authorList>
            <person name="Krey J.F."/>
            <person name="Krystofiak E.S."/>
            <person name="Dumont R.A."/>
            <person name="Vijayakumar S."/>
            <person name="Choi D."/>
            <person name="Rivero F."/>
            <person name="Kachar B."/>
            <person name="Jones S.M."/>
            <person name="Barr-Gillespie P.G."/>
        </authorList>
    </citation>
    <scope>FUNCTION</scope>
    <scope>DISRUPTION PHENOTYPE</scope>
    <scope>TISSUE SPECIFICITY</scope>
    <scope>SUBCELLULAR LOCATION</scope>
</reference>
<proteinExistence type="evidence at protein level"/>
<dbReference type="EMBL" id="AK133070">
    <property type="protein sequence ID" value="BAE21495.1"/>
    <property type="molecule type" value="mRNA"/>
</dbReference>
<dbReference type="EMBL" id="CH466560">
    <property type="protein sequence ID" value="EDL20943.1"/>
    <property type="molecule type" value="Genomic_DNA"/>
</dbReference>
<dbReference type="EMBL" id="BC139068">
    <property type="protein sequence ID" value="AAI39069.1"/>
    <property type="molecule type" value="mRNA"/>
</dbReference>
<dbReference type="EMBL" id="BC139069">
    <property type="protein sequence ID" value="AAI39070.1"/>
    <property type="molecule type" value="mRNA"/>
</dbReference>
<dbReference type="CCDS" id="CCDS23412.1"/>
<dbReference type="RefSeq" id="NP_001028382.1">
    <property type="nucleotide sequence ID" value="NM_001033210.4"/>
</dbReference>
<dbReference type="RefSeq" id="NP_001420732.1">
    <property type="nucleotide sequence ID" value="NM_001433803.1"/>
</dbReference>
<dbReference type="RefSeq" id="NP_001420733.1">
    <property type="nucleotide sequence ID" value="NM_001433804.1"/>
</dbReference>
<dbReference type="RefSeq" id="NP_001420734.1">
    <property type="nucleotide sequence ID" value="NM_001433805.1"/>
</dbReference>
<dbReference type="RefSeq" id="XP_006510809.1">
    <property type="nucleotide sequence ID" value="XM_006510746.3"/>
</dbReference>
<dbReference type="RefSeq" id="XP_006510810.1">
    <property type="nucleotide sequence ID" value="XM_006510747.2"/>
</dbReference>
<dbReference type="SMR" id="Q3V0K9"/>
<dbReference type="BioGRID" id="221886">
    <property type="interactions" value="1"/>
</dbReference>
<dbReference type="FunCoup" id="Q3V0K9">
    <property type="interactions" value="998"/>
</dbReference>
<dbReference type="IntAct" id="Q3V0K9">
    <property type="interactions" value="4"/>
</dbReference>
<dbReference type="MINT" id="Q3V0K9"/>
<dbReference type="STRING" id="10090.ENSMUSP00000091317"/>
<dbReference type="GlyGen" id="Q3V0K9">
    <property type="glycosylation" value="3 sites, 1 N-linked glycan (1 site)"/>
</dbReference>
<dbReference type="iPTMnet" id="Q3V0K9"/>
<dbReference type="PhosphoSitePlus" id="Q3V0K9"/>
<dbReference type="SwissPalm" id="Q3V0K9"/>
<dbReference type="jPOST" id="Q3V0K9"/>
<dbReference type="PaxDb" id="10090-ENSMUSP00000091317"/>
<dbReference type="PeptideAtlas" id="Q3V0K9"/>
<dbReference type="ProteomicsDB" id="289627"/>
<dbReference type="Antibodypedia" id="33495">
    <property type="antibodies" value="148 antibodies from 25 providers"/>
</dbReference>
<dbReference type="DNASU" id="102502"/>
<dbReference type="Ensembl" id="ENSMUST00000093800.9">
    <property type="protein sequence ID" value="ENSMUSP00000091317.3"/>
    <property type="gene ID" value="ENSMUSG00000049493.14"/>
</dbReference>
<dbReference type="GeneID" id="102502"/>
<dbReference type="KEGG" id="mmu:102502"/>
<dbReference type="UCSC" id="uc009rbk.2">
    <property type="organism name" value="mouse"/>
</dbReference>
<dbReference type="AGR" id="MGI:104809"/>
<dbReference type="CTD" id="5357"/>
<dbReference type="MGI" id="MGI:104809">
    <property type="gene designation" value="Pls1"/>
</dbReference>
<dbReference type="VEuPathDB" id="HostDB:ENSMUSG00000049493"/>
<dbReference type="eggNOG" id="KOG0046">
    <property type="taxonomic scope" value="Eukaryota"/>
</dbReference>
<dbReference type="GeneTree" id="ENSGT00950000183097"/>
<dbReference type="HOGENOM" id="CLU_015284_2_0_1"/>
<dbReference type="InParanoid" id="Q3V0K9"/>
<dbReference type="OMA" id="GILLXEN"/>
<dbReference type="OrthoDB" id="431378at2759"/>
<dbReference type="PhylomeDB" id="Q3V0K9"/>
<dbReference type="TreeFam" id="TF300680"/>
<dbReference type="BioGRID-ORCS" id="102502">
    <property type="hits" value="0 hits in 76 CRISPR screens"/>
</dbReference>
<dbReference type="ChiTaRS" id="Pls1">
    <property type="organism name" value="mouse"/>
</dbReference>
<dbReference type="PRO" id="PR:Q3V0K9"/>
<dbReference type="Proteomes" id="UP000000589">
    <property type="component" value="Chromosome 9"/>
</dbReference>
<dbReference type="RNAct" id="Q3V0K9">
    <property type="molecule type" value="protein"/>
</dbReference>
<dbReference type="Bgee" id="ENSMUSG00000049493">
    <property type="expression patterns" value="Expressed in intestinal villus and 175 other cell types or tissues"/>
</dbReference>
<dbReference type="ExpressionAtlas" id="Q3V0K9">
    <property type="expression patterns" value="baseline and differential"/>
</dbReference>
<dbReference type="GO" id="GO:0005903">
    <property type="term" value="C:brush border"/>
    <property type="evidence" value="ECO:0000314"/>
    <property type="project" value="UniProtKB"/>
</dbReference>
<dbReference type="GO" id="GO:0005737">
    <property type="term" value="C:cytoplasm"/>
    <property type="evidence" value="ECO:0000314"/>
    <property type="project" value="MGI"/>
</dbReference>
<dbReference type="GO" id="GO:0005829">
    <property type="term" value="C:cytosol"/>
    <property type="evidence" value="ECO:0000304"/>
    <property type="project" value="Reactome"/>
</dbReference>
<dbReference type="GO" id="GO:0005886">
    <property type="term" value="C:plasma membrane"/>
    <property type="evidence" value="ECO:0007669"/>
    <property type="project" value="Ensembl"/>
</dbReference>
<dbReference type="GO" id="GO:0032420">
    <property type="term" value="C:stereocilium"/>
    <property type="evidence" value="ECO:0000314"/>
    <property type="project" value="UniProtKB"/>
</dbReference>
<dbReference type="GO" id="GO:1990357">
    <property type="term" value="C:terminal web"/>
    <property type="evidence" value="ECO:0000314"/>
    <property type="project" value="MGI"/>
</dbReference>
<dbReference type="GO" id="GO:0051015">
    <property type="term" value="F:actin filament binding"/>
    <property type="evidence" value="ECO:0007669"/>
    <property type="project" value="InterPro"/>
</dbReference>
<dbReference type="GO" id="GO:0005509">
    <property type="term" value="F:calcium ion binding"/>
    <property type="evidence" value="ECO:0007669"/>
    <property type="project" value="InterPro"/>
</dbReference>
<dbReference type="GO" id="GO:0051017">
    <property type="term" value="P:actin filament bundle assembly"/>
    <property type="evidence" value="ECO:0007669"/>
    <property type="project" value="InterPro"/>
</dbReference>
<dbReference type="GO" id="GO:0060088">
    <property type="term" value="P:auditory receptor cell stereocilium organization"/>
    <property type="evidence" value="ECO:0000315"/>
    <property type="project" value="UniProtKB"/>
</dbReference>
<dbReference type="GO" id="GO:0001951">
    <property type="term" value="P:intestinal D-glucose absorption"/>
    <property type="evidence" value="ECO:0000316"/>
    <property type="project" value="UniProtKB"/>
</dbReference>
<dbReference type="GO" id="GO:0040018">
    <property type="term" value="P:positive regulation of multicellular organism growth"/>
    <property type="evidence" value="ECO:0000316"/>
    <property type="project" value="UniProtKB"/>
</dbReference>
<dbReference type="GO" id="GO:1903078">
    <property type="term" value="P:positive regulation of protein localization to plasma membrane"/>
    <property type="evidence" value="ECO:0000315"/>
    <property type="project" value="UniProtKB"/>
</dbReference>
<dbReference type="GO" id="GO:0032532">
    <property type="term" value="P:regulation of microvillus length"/>
    <property type="evidence" value="ECO:0000316"/>
    <property type="project" value="UniProtKB"/>
</dbReference>
<dbReference type="GO" id="GO:1902896">
    <property type="term" value="P:terminal web assembly"/>
    <property type="evidence" value="ECO:0000315"/>
    <property type="project" value="MGI"/>
</dbReference>
<dbReference type="GO" id="GO:0060121">
    <property type="term" value="P:vestibular receptor cell stereocilium organization"/>
    <property type="evidence" value="ECO:0000315"/>
    <property type="project" value="UniProtKB"/>
</dbReference>
<dbReference type="CDD" id="cd21326">
    <property type="entry name" value="CH_PLS1_rpt2"/>
    <property type="match status" value="1"/>
</dbReference>
<dbReference type="CDD" id="cd21332">
    <property type="entry name" value="CH_PLS1_rpt4"/>
    <property type="match status" value="1"/>
</dbReference>
<dbReference type="CDD" id="cd00051">
    <property type="entry name" value="EFh"/>
    <property type="match status" value="1"/>
</dbReference>
<dbReference type="FunFam" id="1.10.238.10:FF:000059">
    <property type="entry name" value="Plastin 1"/>
    <property type="match status" value="1"/>
</dbReference>
<dbReference type="FunFam" id="1.10.418.10:FF:000010">
    <property type="entry name" value="Plastin-3 isoform 1"/>
    <property type="match status" value="1"/>
</dbReference>
<dbReference type="FunFam" id="1.10.418.10:FF:000012">
    <property type="entry name" value="Plastin-3 isoform 1"/>
    <property type="match status" value="1"/>
</dbReference>
<dbReference type="FunFam" id="1.10.418.10:FF:000014">
    <property type="entry name" value="Plastin-3 isoform 1"/>
    <property type="match status" value="1"/>
</dbReference>
<dbReference type="FunFam" id="1.10.418.10:FF:000025">
    <property type="entry name" value="Plastin-3 isoform 1"/>
    <property type="match status" value="1"/>
</dbReference>
<dbReference type="Gene3D" id="1.10.418.10">
    <property type="entry name" value="Calponin-like domain"/>
    <property type="match status" value="4"/>
</dbReference>
<dbReference type="Gene3D" id="1.10.238.10">
    <property type="entry name" value="EF-hand"/>
    <property type="match status" value="1"/>
</dbReference>
<dbReference type="InterPro" id="IPR001589">
    <property type="entry name" value="Actinin_actin-bd_CS"/>
</dbReference>
<dbReference type="InterPro" id="IPR001715">
    <property type="entry name" value="CH_dom"/>
</dbReference>
<dbReference type="InterPro" id="IPR036872">
    <property type="entry name" value="CH_dom_sf"/>
</dbReference>
<dbReference type="InterPro" id="IPR011992">
    <property type="entry name" value="EF-hand-dom_pair"/>
</dbReference>
<dbReference type="InterPro" id="IPR018247">
    <property type="entry name" value="EF_Hand_1_Ca_BS"/>
</dbReference>
<dbReference type="InterPro" id="IPR002048">
    <property type="entry name" value="EF_hand_dom"/>
</dbReference>
<dbReference type="InterPro" id="IPR039959">
    <property type="entry name" value="Fimbrin/Plastin"/>
</dbReference>
<dbReference type="PANTHER" id="PTHR19961">
    <property type="entry name" value="FIMBRIN/PLASTIN"/>
    <property type="match status" value="1"/>
</dbReference>
<dbReference type="PANTHER" id="PTHR19961:SF27">
    <property type="entry name" value="PLASTIN-1"/>
    <property type="match status" value="1"/>
</dbReference>
<dbReference type="Pfam" id="PF00307">
    <property type="entry name" value="CH"/>
    <property type="match status" value="4"/>
</dbReference>
<dbReference type="Pfam" id="PF13499">
    <property type="entry name" value="EF-hand_7"/>
    <property type="match status" value="1"/>
</dbReference>
<dbReference type="SMART" id="SM00033">
    <property type="entry name" value="CH"/>
    <property type="match status" value="4"/>
</dbReference>
<dbReference type="SMART" id="SM00054">
    <property type="entry name" value="EFh"/>
    <property type="match status" value="2"/>
</dbReference>
<dbReference type="SUPFAM" id="SSF47576">
    <property type="entry name" value="Calponin-homology domain, CH-domain"/>
    <property type="match status" value="1"/>
</dbReference>
<dbReference type="SUPFAM" id="SSF47473">
    <property type="entry name" value="EF-hand"/>
    <property type="match status" value="1"/>
</dbReference>
<dbReference type="PROSITE" id="PS00019">
    <property type="entry name" value="ACTININ_1"/>
    <property type="match status" value="2"/>
</dbReference>
<dbReference type="PROSITE" id="PS00020">
    <property type="entry name" value="ACTININ_2"/>
    <property type="match status" value="2"/>
</dbReference>
<dbReference type="PROSITE" id="PS50021">
    <property type="entry name" value="CH"/>
    <property type="match status" value="4"/>
</dbReference>
<dbReference type="PROSITE" id="PS00018">
    <property type="entry name" value="EF_HAND_1"/>
    <property type="match status" value="2"/>
</dbReference>
<dbReference type="PROSITE" id="PS50222">
    <property type="entry name" value="EF_HAND_2"/>
    <property type="match status" value="2"/>
</dbReference>
<name>PLSI_MOUSE</name>
<gene>
    <name type="primary">Pls1</name>
</gene>
<sequence length="630" mass="70408">MENSTTTISREELEELQEAFNKIDIDNSGYVSDYELQDLFKEASLPLPGYKVREIVEKILVVADNNKDGKISFEEFVSLMQELKSKDISKTFRKIINKREGITAIGGTSSISSEGTQHSYSEEEKVAFVNWINKALENDADCSHLLPMNPNDGSLFKSLADGILLCKMINLSEPDTIDERAINKKKLTPFTVSENLNLALNSASAIGCTVVNIGAQDLKEGKPHLVLGLLWQIIKVGLFADIEISRNEALIALLKDGEDLEELMKLSPEELLLRWVNYHLTNAGWRTINNFSQDIKDSKAYFHLLNQIAPKGDRDDGPAVAIDLSGFNEKNDLKRAGFMLQEADKLGCRQFVTPADVVSGNPKLNLAFVANLFNTYPCLHKPDNNDIDLNLLEGESKEERTFRNWMNSLGVNPYINHLYSDLADALVIFQLYEMIRVPVNWSQVNKPPYPALGGNMKKIENCNYAVELGKNEAKFSLVGIAGQDLNEGNATLTLALVWQLMRRYTLKVLSDLGEGEKVTDDIIIKWVNQTLKSANKSTSISSFKDKSISTSLPVLDLIDAIAPNAVRQEMIKREHLTDEDKLNNAKYAISVARKIGARIYALPDDLVEVKPKMVMTVFACLMGKGLNRLK</sequence>
<accession>Q3V0K9</accession>
<feature type="chain" id="PRO_0000364188" description="Plastin-1">
    <location>
        <begin position="1"/>
        <end position="630"/>
    </location>
</feature>
<feature type="domain" description="EF-hand 1" evidence="4">
    <location>
        <begin position="11"/>
        <end position="46"/>
    </location>
</feature>
<feature type="domain" description="EF-hand 2" evidence="4">
    <location>
        <begin position="51"/>
        <end position="86"/>
    </location>
</feature>
<feature type="domain" description="Calponin-homology (CH) 1" evidence="3">
    <location>
        <begin position="122"/>
        <end position="238"/>
    </location>
</feature>
<feature type="domain" description="Calponin-homology (CH) 2" evidence="3">
    <location>
        <begin position="266"/>
        <end position="377"/>
    </location>
</feature>
<feature type="domain" description="Calponin-homology (CH) 3" evidence="3">
    <location>
        <begin position="396"/>
        <end position="505"/>
    </location>
</feature>
<feature type="domain" description="Calponin-homology (CH) 4" evidence="3">
    <location>
        <begin position="517"/>
        <end position="626"/>
    </location>
</feature>
<feature type="region of interest" description="Actin-binding 1">
    <location>
        <begin position="108"/>
        <end position="381"/>
    </location>
</feature>
<feature type="region of interest" description="Actin-binding 2">
    <location>
        <begin position="382"/>
        <end position="626"/>
    </location>
</feature>
<feature type="binding site" evidence="4">
    <location>
        <position position="24"/>
    </location>
    <ligand>
        <name>Ca(2+)</name>
        <dbReference type="ChEBI" id="CHEBI:29108"/>
        <label>1</label>
    </ligand>
</feature>
<feature type="binding site" evidence="4">
    <location>
        <position position="26"/>
    </location>
    <ligand>
        <name>Ca(2+)</name>
        <dbReference type="ChEBI" id="CHEBI:29108"/>
        <label>1</label>
    </ligand>
</feature>
<feature type="binding site" evidence="4">
    <location>
        <position position="28"/>
    </location>
    <ligand>
        <name>Ca(2+)</name>
        <dbReference type="ChEBI" id="CHEBI:29108"/>
        <label>1</label>
    </ligand>
</feature>
<feature type="binding site" evidence="4">
    <location>
        <position position="30"/>
    </location>
    <ligand>
        <name>Ca(2+)</name>
        <dbReference type="ChEBI" id="CHEBI:29108"/>
        <label>1</label>
    </ligand>
</feature>
<feature type="binding site" evidence="4">
    <location>
        <position position="35"/>
    </location>
    <ligand>
        <name>Ca(2+)</name>
        <dbReference type="ChEBI" id="CHEBI:29108"/>
        <label>1</label>
    </ligand>
</feature>
<feature type="binding site" evidence="4">
    <location>
        <position position="64"/>
    </location>
    <ligand>
        <name>Ca(2+)</name>
        <dbReference type="ChEBI" id="CHEBI:29108"/>
        <label>2</label>
    </ligand>
</feature>
<feature type="binding site" evidence="4">
    <location>
        <position position="66"/>
    </location>
    <ligand>
        <name>Ca(2+)</name>
        <dbReference type="ChEBI" id="CHEBI:29108"/>
        <label>2</label>
    </ligand>
</feature>
<feature type="binding site" evidence="4">
    <location>
        <position position="68"/>
    </location>
    <ligand>
        <name>Ca(2+)</name>
        <dbReference type="ChEBI" id="CHEBI:29108"/>
        <label>2</label>
    </ligand>
</feature>
<feature type="binding site" evidence="4">
    <location>
        <position position="70"/>
    </location>
    <ligand>
        <name>Ca(2+)</name>
        <dbReference type="ChEBI" id="CHEBI:29108"/>
        <label>2</label>
    </ligand>
</feature>
<feature type="binding site" evidence="4">
    <location>
        <position position="75"/>
    </location>
    <ligand>
        <name>Ca(2+)</name>
        <dbReference type="ChEBI" id="CHEBI:29108"/>
        <label>2</label>
    </ligand>
</feature>
<feature type="modified residue" description="N-acetylmethionine" evidence="2">
    <location>
        <position position="1"/>
    </location>
</feature>
<organism>
    <name type="scientific">Mus musculus</name>
    <name type="common">Mouse</name>
    <dbReference type="NCBI Taxonomy" id="10090"/>
    <lineage>
        <taxon>Eukaryota</taxon>
        <taxon>Metazoa</taxon>
        <taxon>Chordata</taxon>
        <taxon>Craniata</taxon>
        <taxon>Vertebrata</taxon>
        <taxon>Euteleostomi</taxon>
        <taxon>Mammalia</taxon>
        <taxon>Eutheria</taxon>
        <taxon>Euarchontoglires</taxon>
        <taxon>Glires</taxon>
        <taxon>Rodentia</taxon>
        <taxon>Myomorpha</taxon>
        <taxon>Muroidea</taxon>
        <taxon>Muridae</taxon>
        <taxon>Murinae</taxon>
        <taxon>Mus</taxon>
        <taxon>Mus</taxon>
    </lineage>
</organism>